<evidence type="ECO:0000255" key="1">
    <source>
        <dbReference type="HAMAP-Rule" id="MF_00040"/>
    </source>
</evidence>
<feature type="chain" id="PRO_1000003149" description="Ribosome-recycling factor">
    <location>
        <begin position="1"/>
        <end position="185"/>
    </location>
</feature>
<keyword id="KW-0963">Cytoplasm</keyword>
<keyword id="KW-0648">Protein biosynthesis</keyword>
<keyword id="KW-1185">Reference proteome</keyword>
<dbReference type="EMBL" id="CR931997">
    <property type="protein sequence ID" value="CAI37336.1"/>
    <property type="molecule type" value="Genomic_DNA"/>
</dbReference>
<dbReference type="RefSeq" id="WP_005295269.1">
    <property type="nucleotide sequence ID" value="NC_007164.1"/>
</dbReference>
<dbReference type="SMR" id="Q4JV21"/>
<dbReference type="STRING" id="306537.jk1172"/>
<dbReference type="GeneID" id="92738691"/>
<dbReference type="KEGG" id="cjk:jk1172"/>
<dbReference type="eggNOG" id="COG0233">
    <property type="taxonomic scope" value="Bacteria"/>
</dbReference>
<dbReference type="HOGENOM" id="CLU_073981_2_0_11"/>
<dbReference type="OrthoDB" id="9804006at2"/>
<dbReference type="Proteomes" id="UP000000545">
    <property type="component" value="Chromosome"/>
</dbReference>
<dbReference type="GO" id="GO:0005737">
    <property type="term" value="C:cytoplasm"/>
    <property type="evidence" value="ECO:0007669"/>
    <property type="project" value="UniProtKB-SubCell"/>
</dbReference>
<dbReference type="GO" id="GO:0043023">
    <property type="term" value="F:ribosomal large subunit binding"/>
    <property type="evidence" value="ECO:0007669"/>
    <property type="project" value="TreeGrafter"/>
</dbReference>
<dbReference type="GO" id="GO:0006415">
    <property type="term" value="P:translational termination"/>
    <property type="evidence" value="ECO:0007669"/>
    <property type="project" value="UniProtKB-UniRule"/>
</dbReference>
<dbReference type="CDD" id="cd00520">
    <property type="entry name" value="RRF"/>
    <property type="match status" value="1"/>
</dbReference>
<dbReference type="FunFam" id="1.10.132.20:FF:000001">
    <property type="entry name" value="Ribosome-recycling factor"/>
    <property type="match status" value="1"/>
</dbReference>
<dbReference type="FunFam" id="3.30.1360.40:FF:000001">
    <property type="entry name" value="Ribosome-recycling factor"/>
    <property type="match status" value="1"/>
</dbReference>
<dbReference type="Gene3D" id="3.30.1360.40">
    <property type="match status" value="1"/>
</dbReference>
<dbReference type="Gene3D" id="1.10.132.20">
    <property type="entry name" value="Ribosome-recycling factor"/>
    <property type="match status" value="1"/>
</dbReference>
<dbReference type="HAMAP" id="MF_00040">
    <property type="entry name" value="RRF"/>
    <property type="match status" value="1"/>
</dbReference>
<dbReference type="InterPro" id="IPR002661">
    <property type="entry name" value="Ribosome_recyc_fac"/>
</dbReference>
<dbReference type="InterPro" id="IPR023584">
    <property type="entry name" value="Ribosome_recyc_fac_dom"/>
</dbReference>
<dbReference type="InterPro" id="IPR036191">
    <property type="entry name" value="RRF_sf"/>
</dbReference>
<dbReference type="NCBIfam" id="TIGR00496">
    <property type="entry name" value="frr"/>
    <property type="match status" value="1"/>
</dbReference>
<dbReference type="PANTHER" id="PTHR20982:SF3">
    <property type="entry name" value="MITOCHONDRIAL RIBOSOME RECYCLING FACTOR PSEUDO 1"/>
    <property type="match status" value="1"/>
</dbReference>
<dbReference type="PANTHER" id="PTHR20982">
    <property type="entry name" value="RIBOSOME RECYCLING FACTOR"/>
    <property type="match status" value="1"/>
</dbReference>
<dbReference type="Pfam" id="PF01765">
    <property type="entry name" value="RRF"/>
    <property type="match status" value="1"/>
</dbReference>
<dbReference type="SUPFAM" id="SSF55194">
    <property type="entry name" value="Ribosome recycling factor, RRF"/>
    <property type="match status" value="1"/>
</dbReference>
<reference key="1">
    <citation type="journal article" date="2005" name="J. Bacteriol.">
        <title>Complete genome sequence and analysis of the multiresistant nosocomial pathogen Corynebacterium jeikeium K411, a lipid-requiring bacterium of the human skin flora.</title>
        <authorList>
            <person name="Tauch A."/>
            <person name="Kaiser O."/>
            <person name="Hain T."/>
            <person name="Goesmann A."/>
            <person name="Weisshaar B."/>
            <person name="Albersmeier A."/>
            <person name="Bekel T."/>
            <person name="Bischoff N."/>
            <person name="Brune I."/>
            <person name="Chakraborty T."/>
            <person name="Kalinowski J."/>
            <person name="Meyer F."/>
            <person name="Rupp O."/>
            <person name="Schneiker S."/>
            <person name="Viehoever P."/>
            <person name="Puehler A."/>
        </authorList>
    </citation>
    <scope>NUCLEOTIDE SEQUENCE [LARGE SCALE GENOMIC DNA]</scope>
    <source>
        <strain>K411</strain>
    </source>
</reference>
<comment type="function">
    <text evidence="1">Responsible for the release of ribosomes from messenger RNA at the termination of protein biosynthesis. May increase the efficiency of translation by recycling ribosomes from one round of translation to another.</text>
</comment>
<comment type="subcellular location">
    <subcellularLocation>
        <location evidence="1">Cytoplasm</location>
    </subcellularLocation>
</comment>
<comment type="similarity">
    <text evidence="1">Belongs to the RRF family.</text>
</comment>
<sequence>MIDDILLESEERMTSSVEHAREDLTTIRTGRANPSMFNGVVAEYYGVPTPITQMATISVPEPRMLLIKPYEQSTMDAIENAIRNSDLGVNPTNDGQVLRVTIPQLTEERRKEMVKVAKSKGEDAKIAIRNIRRKGMEQLGKIQKDGEAGEDEVRAAEKDLEKITHSYVEQVDSLVEAKEKELLEV</sequence>
<name>RRF_CORJK</name>
<organism>
    <name type="scientific">Corynebacterium jeikeium (strain K411)</name>
    <dbReference type="NCBI Taxonomy" id="306537"/>
    <lineage>
        <taxon>Bacteria</taxon>
        <taxon>Bacillati</taxon>
        <taxon>Actinomycetota</taxon>
        <taxon>Actinomycetes</taxon>
        <taxon>Mycobacteriales</taxon>
        <taxon>Corynebacteriaceae</taxon>
        <taxon>Corynebacterium</taxon>
    </lineage>
</organism>
<accession>Q4JV21</accession>
<proteinExistence type="inferred from homology"/>
<protein>
    <recommendedName>
        <fullName evidence="1">Ribosome-recycling factor</fullName>
        <shortName evidence="1">RRF</shortName>
    </recommendedName>
    <alternativeName>
        <fullName evidence="1">Ribosome-releasing factor</fullName>
    </alternativeName>
</protein>
<gene>
    <name evidence="1" type="primary">frr</name>
    <name type="ordered locus">jk1172</name>
</gene>